<protein>
    <recommendedName>
        <fullName evidence="1">Fructose-1,6-bisphosphatase class 3</fullName>
        <shortName evidence="1">FBPase class 3</shortName>
        <ecNumber evidence="1">3.1.3.11</ecNumber>
    </recommendedName>
    <alternativeName>
        <fullName evidence="1">D-fructose-1,6-bisphosphate 1-phosphohydrolase class 3</fullName>
    </alternativeName>
</protein>
<keyword id="KW-0119">Carbohydrate metabolism</keyword>
<keyword id="KW-0378">Hydrolase</keyword>
<keyword id="KW-0464">Manganese</keyword>
<evidence type="ECO:0000255" key="1">
    <source>
        <dbReference type="HAMAP-Rule" id="MF_01854"/>
    </source>
</evidence>
<evidence type="ECO:0000305" key="2"/>
<proteinExistence type="inferred from homology"/>
<comment type="catalytic activity">
    <reaction evidence="1">
        <text>beta-D-fructose 1,6-bisphosphate + H2O = beta-D-fructose 6-phosphate + phosphate</text>
        <dbReference type="Rhea" id="RHEA:11064"/>
        <dbReference type="ChEBI" id="CHEBI:15377"/>
        <dbReference type="ChEBI" id="CHEBI:32966"/>
        <dbReference type="ChEBI" id="CHEBI:43474"/>
        <dbReference type="ChEBI" id="CHEBI:57634"/>
        <dbReference type="EC" id="3.1.3.11"/>
    </reaction>
</comment>
<comment type="cofactor">
    <cofactor evidence="1">
        <name>Mn(2+)</name>
        <dbReference type="ChEBI" id="CHEBI:29035"/>
    </cofactor>
</comment>
<comment type="pathway">
    <text evidence="1">Carbohydrate biosynthesis; gluconeogenesis.</text>
</comment>
<comment type="similarity">
    <text evidence="1">Belongs to the FBPase class 3 family.</text>
</comment>
<comment type="sequence caution" evidence="2">
    <conflict type="erroneous initiation">
        <sequence resource="EMBL-CDS" id="BAG33335"/>
    </conflict>
</comment>
<organism>
    <name type="scientific">Porphyromonas gingivalis (strain ATCC 33277 / DSM 20709 / CIP 103683 / JCM 12257 / NCTC 11834 / 2561)</name>
    <dbReference type="NCBI Taxonomy" id="431947"/>
    <lineage>
        <taxon>Bacteria</taxon>
        <taxon>Pseudomonadati</taxon>
        <taxon>Bacteroidota</taxon>
        <taxon>Bacteroidia</taxon>
        <taxon>Bacteroidales</taxon>
        <taxon>Porphyromonadaceae</taxon>
        <taxon>Porphyromonas</taxon>
    </lineage>
</organism>
<accession>B2RIZ0</accession>
<gene>
    <name evidence="1" type="primary">fbp</name>
    <name type="ordered locus">PGN_0816</name>
</gene>
<sequence length="655" mass="75096">MLKHDLDYLELLSESFPTATEVATEIINLEAILNLPKGTEHFLADIHGEYEAFIHVLKNASGSIRRKVDEVFGGQLRQNQKRELCTLIYYPREKLELVKQSDERMEDWYMVTLNQLIKVCQKAAEKYTRSKVRKTLPPKYSYIIQELLHEDGVNPNKSAYISSIFSSIISTGCADDFIIAISETIQRLVIDHLHVVGDVFDRGPGAHIIMDTLMKYHHFDIQWGNHDMLWMGAAVGNASCMANVVRIALRYANLDTLESGYGINLLPLARFAMDTYADDPCTVFKPKLAQADQTYDDKSVYLISQMHKAISIIQFKLEHQIIARHPEYKMDNRDLFHLVNFTDGTIKLSSGVYPMLDMNFPTVDPADPYALTEQEQNIVDRLMGCFMRSEKLQNHLKCLYRHGSMYLTYNMNLLYHASIPLNKDKSLKKVRVGDKTYAGRELLDKVEEMIRTAYVAPEKSDQRLAAVDYMWYLWCGPDSPLFDKAMMTTFERYFIEDKATHHEEKGYYYVYRQEKAVCEMILKEFGLEGPDTHIINGHVPVKAKKGELPIGAEGKLMLIDGGFSKAYQSSTGIAGYTLIFNSQGLHLVQHEPFSSTRKAIEEMEDIKSITVVREVTSHRMLVKDTDNGHLLSKQVENLKKLLQAYSYGLIKERKK</sequence>
<name>F16PC_PORG3</name>
<reference key="1">
    <citation type="journal article" date="2008" name="DNA Res.">
        <title>Determination of the genome sequence of Porphyromonas gingivalis strain ATCC 33277 and genomic comparison with strain W83 revealed extensive genome rearrangements in P. gingivalis.</title>
        <authorList>
            <person name="Naito M."/>
            <person name="Hirakawa H."/>
            <person name="Yamashita A."/>
            <person name="Ohara N."/>
            <person name="Shoji M."/>
            <person name="Yukitake H."/>
            <person name="Nakayama K."/>
            <person name="Toh H."/>
            <person name="Yoshimura F."/>
            <person name="Kuhara S."/>
            <person name="Hattori M."/>
            <person name="Hayashi T."/>
            <person name="Nakayama K."/>
        </authorList>
    </citation>
    <scope>NUCLEOTIDE SEQUENCE [LARGE SCALE GENOMIC DNA]</scope>
    <source>
        <strain>ATCC 33277 / DSM 20709 / CIP 103683 / JCM 12257 / NCTC 11834 / 2561</strain>
    </source>
</reference>
<feature type="chain" id="PRO_0000363108" description="Fructose-1,6-bisphosphatase class 3">
    <location>
        <begin position="1"/>
        <end position="655"/>
    </location>
</feature>
<dbReference type="EC" id="3.1.3.11" evidence="1"/>
<dbReference type="EMBL" id="AP009380">
    <property type="protein sequence ID" value="BAG33335.1"/>
    <property type="status" value="ALT_INIT"/>
    <property type="molecule type" value="Genomic_DNA"/>
</dbReference>
<dbReference type="KEGG" id="pgn:PGN_0816"/>
<dbReference type="eggNOG" id="COG3855">
    <property type="taxonomic scope" value="Bacteria"/>
</dbReference>
<dbReference type="HOGENOM" id="CLU_028392_2_0_10"/>
<dbReference type="UniPathway" id="UPA00138"/>
<dbReference type="Proteomes" id="UP000008842">
    <property type="component" value="Chromosome"/>
</dbReference>
<dbReference type="GO" id="GO:0042132">
    <property type="term" value="F:fructose 1,6-bisphosphate 1-phosphatase activity"/>
    <property type="evidence" value="ECO:0007669"/>
    <property type="project" value="UniProtKB-UniRule"/>
</dbReference>
<dbReference type="GO" id="GO:0006094">
    <property type="term" value="P:gluconeogenesis"/>
    <property type="evidence" value="ECO:0007669"/>
    <property type="project" value="UniProtKB-UniRule"/>
</dbReference>
<dbReference type="HAMAP" id="MF_01854">
    <property type="entry name" value="FBPase_class3"/>
    <property type="match status" value="1"/>
</dbReference>
<dbReference type="InterPro" id="IPR009164">
    <property type="entry name" value="FBPtase_class3"/>
</dbReference>
<dbReference type="InterPro" id="IPR029052">
    <property type="entry name" value="Metallo-depent_PP-like"/>
</dbReference>
<dbReference type="Pfam" id="PF06874">
    <property type="entry name" value="FBPase_2"/>
    <property type="match status" value="1"/>
</dbReference>
<dbReference type="PIRSF" id="PIRSF000906">
    <property type="entry name" value="FBPtase_Bacill"/>
    <property type="match status" value="1"/>
</dbReference>
<dbReference type="SUPFAM" id="SSF56300">
    <property type="entry name" value="Metallo-dependent phosphatases"/>
    <property type="match status" value="1"/>
</dbReference>